<feature type="chain" id="PRO_1000139449" description="CTP synthase">
    <location>
        <begin position="1"/>
        <end position="545"/>
    </location>
</feature>
<feature type="domain" description="Glutamine amidotransferase type-1" evidence="1">
    <location>
        <begin position="291"/>
        <end position="542"/>
    </location>
</feature>
<feature type="region of interest" description="Amidoligase domain" evidence="1">
    <location>
        <begin position="1"/>
        <end position="266"/>
    </location>
</feature>
<feature type="active site" description="Nucleophile; for glutamine hydrolysis" evidence="1">
    <location>
        <position position="379"/>
    </location>
</feature>
<feature type="active site" evidence="1">
    <location>
        <position position="515"/>
    </location>
</feature>
<feature type="active site" evidence="1">
    <location>
        <position position="517"/>
    </location>
</feature>
<feature type="binding site" evidence="1">
    <location>
        <position position="14"/>
    </location>
    <ligand>
        <name>CTP</name>
        <dbReference type="ChEBI" id="CHEBI:37563"/>
        <note>allosteric inhibitor</note>
    </ligand>
</feature>
<feature type="binding site" evidence="1">
    <location>
        <position position="14"/>
    </location>
    <ligand>
        <name>UTP</name>
        <dbReference type="ChEBI" id="CHEBI:46398"/>
    </ligand>
</feature>
<feature type="binding site" evidence="1">
    <location>
        <begin position="15"/>
        <end position="20"/>
    </location>
    <ligand>
        <name>ATP</name>
        <dbReference type="ChEBI" id="CHEBI:30616"/>
    </ligand>
</feature>
<feature type="binding site" evidence="1">
    <location>
        <position position="72"/>
    </location>
    <ligand>
        <name>ATP</name>
        <dbReference type="ChEBI" id="CHEBI:30616"/>
    </ligand>
</feature>
<feature type="binding site" evidence="1">
    <location>
        <position position="72"/>
    </location>
    <ligand>
        <name>Mg(2+)</name>
        <dbReference type="ChEBI" id="CHEBI:18420"/>
    </ligand>
</feature>
<feature type="binding site" evidence="1">
    <location>
        <position position="140"/>
    </location>
    <ligand>
        <name>Mg(2+)</name>
        <dbReference type="ChEBI" id="CHEBI:18420"/>
    </ligand>
</feature>
<feature type="binding site" evidence="1">
    <location>
        <begin position="147"/>
        <end position="149"/>
    </location>
    <ligand>
        <name>CTP</name>
        <dbReference type="ChEBI" id="CHEBI:37563"/>
        <note>allosteric inhibitor</note>
    </ligand>
</feature>
<feature type="binding site" evidence="1">
    <location>
        <begin position="187"/>
        <end position="192"/>
    </location>
    <ligand>
        <name>CTP</name>
        <dbReference type="ChEBI" id="CHEBI:37563"/>
        <note>allosteric inhibitor</note>
    </ligand>
</feature>
<feature type="binding site" evidence="1">
    <location>
        <begin position="187"/>
        <end position="192"/>
    </location>
    <ligand>
        <name>UTP</name>
        <dbReference type="ChEBI" id="CHEBI:46398"/>
    </ligand>
</feature>
<feature type="binding site" evidence="1">
    <location>
        <position position="223"/>
    </location>
    <ligand>
        <name>CTP</name>
        <dbReference type="ChEBI" id="CHEBI:37563"/>
        <note>allosteric inhibitor</note>
    </ligand>
</feature>
<feature type="binding site" evidence="1">
    <location>
        <position position="223"/>
    </location>
    <ligand>
        <name>UTP</name>
        <dbReference type="ChEBI" id="CHEBI:46398"/>
    </ligand>
</feature>
<feature type="binding site" evidence="1">
    <location>
        <begin position="239"/>
        <end position="241"/>
    </location>
    <ligand>
        <name>ATP</name>
        <dbReference type="ChEBI" id="CHEBI:30616"/>
    </ligand>
</feature>
<feature type="binding site" evidence="1">
    <location>
        <position position="352"/>
    </location>
    <ligand>
        <name>L-glutamine</name>
        <dbReference type="ChEBI" id="CHEBI:58359"/>
    </ligand>
</feature>
<feature type="binding site" evidence="1">
    <location>
        <begin position="380"/>
        <end position="383"/>
    </location>
    <ligand>
        <name>L-glutamine</name>
        <dbReference type="ChEBI" id="CHEBI:58359"/>
    </ligand>
</feature>
<feature type="binding site" evidence="1">
    <location>
        <position position="403"/>
    </location>
    <ligand>
        <name>L-glutamine</name>
        <dbReference type="ChEBI" id="CHEBI:58359"/>
    </ligand>
</feature>
<feature type="binding site" evidence="1">
    <location>
        <position position="470"/>
    </location>
    <ligand>
        <name>L-glutamine</name>
        <dbReference type="ChEBI" id="CHEBI:58359"/>
    </ligand>
</feature>
<organism>
    <name type="scientific">Escherichia coli (strain SE11)</name>
    <dbReference type="NCBI Taxonomy" id="409438"/>
    <lineage>
        <taxon>Bacteria</taxon>
        <taxon>Pseudomonadati</taxon>
        <taxon>Pseudomonadota</taxon>
        <taxon>Gammaproteobacteria</taxon>
        <taxon>Enterobacterales</taxon>
        <taxon>Enterobacteriaceae</taxon>
        <taxon>Escherichia</taxon>
    </lineage>
</organism>
<sequence>MTTNYIFVTGGVVSSLGKGIAAASLAAILEARGLNVTIMKLDPYINVDPGTMSPIQHGEVFVTEDGAETDLDLGHYERFIRTKMSRRNNFTTGRIYSDVLRKERRGDYLGATVQVIPHITNAIKERVLEGGEGHDVVLVEIGGTVGDIESLPFLEAIRQMAVEIGREHTLFMHLTLVPYMAASGEVKTKPTQHSVKELLSIGIQPDILICRSDRAVPANERAKIALFCNVPEKAVISLKDVDSIYKIPGLLKSQGLDDYICKRFSLNCPEANLSEWEQVIFEEANPVSEVTIGMVGKYIELPDAYKSVIEALKHGGLKNRVSVNIKLIDSQDVETRGVEILKGLDAILVPGGFGYRGVEGMITTARFARENNIPYLGICLGMQVALIDYARHVANMENANSTEFVPDCKYPVVALITEWRDENGNVEVRSEKSDLGGTMRLGAQQCQLVDDSLVRQLYNAPTIVERHRHRYEVNNMLLKQIEDAGLRVAGRSGDDQLVEIIEVPNHPWFVACQFHPEFTSTPRDGHPLFAGFVKAASEFQKRQAK</sequence>
<reference key="1">
    <citation type="journal article" date="2008" name="DNA Res.">
        <title>Complete genome sequence and comparative analysis of the wild-type commensal Escherichia coli strain SE11 isolated from a healthy adult.</title>
        <authorList>
            <person name="Oshima K."/>
            <person name="Toh H."/>
            <person name="Ogura Y."/>
            <person name="Sasamoto H."/>
            <person name="Morita H."/>
            <person name="Park S.-H."/>
            <person name="Ooka T."/>
            <person name="Iyoda S."/>
            <person name="Taylor T.D."/>
            <person name="Hayashi T."/>
            <person name="Itoh K."/>
            <person name="Hattori M."/>
        </authorList>
    </citation>
    <scope>NUCLEOTIDE SEQUENCE [LARGE SCALE GENOMIC DNA]</scope>
    <source>
        <strain>SE11</strain>
    </source>
</reference>
<protein>
    <recommendedName>
        <fullName evidence="1">CTP synthase</fullName>
        <ecNumber evidence="1">6.3.4.2</ecNumber>
    </recommendedName>
    <alternativeName>
        <fullName evidence="1">Cytidine 5'-triphosphate synthase</fullName>
    </alternativeName>
    <alternativeName>
        <fullName evidence="1">Cytidine triphosphate synthetase</fullName>
        <shortName evidence="1">CTP synthetase</shortName>
        <shortName evidence="1">CTPS</shortName>
    </alternativeName>
    <alternativeName>
        <fullName evidence="1">UTP--ammonia ligase</fullName>
    </alternativeName>
</protein>
<comment type="function">
    <text evidence="1">Catalyzes the ATP-dependent amination of UTP to CTP with either L-glutamine or ammonia as the source of nitrogen. Regulates intracellular CTP levels through interactions with the four ribonucleotide triphosphates.</text>
</comment>
<comment type="catalytic activity">
    <reaction evidence="1">
        <text>UTP + L-glutamine + ATP + H2O = CTP + L-glutamate + ADP + phosphate + 2 H(+)</text>
        <dbReference type="Rhea" id="RHEA:26426"/>
        <dbReference type="ChEBI" id="CHEBI:15377"/>
        <dbReference type="ChEBI" id="CHEBI:15378"/>
        <dbReference type="ChEBI" id="CHEBI:29985"/>
        <dbReference type="ChEBI" id="CHEBI:30616"/>
        <dbReference type="ChEBI" id="CHEBI:37563"/>
        <dbReference type="ChEBI" id="CHEBI:43474"/>
        <dbReference type="ChEBI" id="CHEBI:46398"/>
        <dbReference type="ChEBI" id="CHEBI:58359"/>
        <dbReference type="ChEBI" id="CHEBI:456216"/>
        <dbReference type="EC" id="6.3.4.2"/>
    </reaction>
</comment>
<comment type="catalytic activity">
    <reaction evidence="1">
        <text>L-glutamine + H2O = L-glutamate + NH4(+)</text>
        <dbReference type="Rhea" id="RHEA:15889"/>
        <dbReference type="ChEBI" id="CHEBI:15377"/>
        <dbReference type="ChEBI" id="CHEBI:28938"/>
        <dbReference type="ChEBI" id="CHEBI:29985"/>
        <dbReference type="ChEBI" id="CHEBI:58359"/>
    </reaction>
</comment>
<comment type="catalytic activity">
    <reaction evidence="1">
        <text>UTP + NH4(+) + ATP = CTP + ADP + phosphate + 2 H(+)</text>
        <dbReference type="Rhea" id="RHEA:16597"/>
        <dbReference type="ChEBI" id="CHEBI:15378"/>
        <dbReference type="ChEBI" id="CHEBI:28938"/>
        <dbReference type="ChEBI" id="CHEBI:30616"/>
        <dbReference type="ChEBI" id="CHEBI:37563"/>
        <dbReference type="ChEBI" id="CHEBI:43474"/>
        <dbReference type="ChEBI" id="CHEBI:46398"/>
        <dbReference type="ChEBI" id="CHEBI:456216"/>
    </reaction>
</comment>
<comment type="activity regulation">
    <text evidence="1">Allosterically activated by GTP, when glutamine is the substrate; GTP has no effect on the reaction when ammonia is the substrate. The allosteric effector GTP functions by stabilizing the protein conformation that binds the tetrahedral intermediate(s) formed during glutamine hydrolysis. Inhibited by the product CTP, via allosteric rather than competitive inhibition.</text>
</comment>
<comment type="pathway">
    <text evidence="1">Pyrimidine metabolism; CTP biosynthesis via de novo pathway; CTP from UDP: step 2/2.</text>
</comment>
<comment type="subunit">
    <text evidence="1">Homotetramer.</text>
</comment>
<comment type="miscellaneous">
    <text evidence="1">CTPSs have evolved a hybrid strategy for distinguishing between UTP and CTP. The overlapping regions of the product feedback inhibitory and substrate sites recognize a common feature in both compounds, the triphosphate moiety. To differentiate isosteric substrate and product pyrimidine rings, an additional pocket far from the expected kinase/ligase catalytic site, specifically recognizes the cytosine and ribose portions of the product inhibitor.</text>
</comment>
<comment type="similarity">
    <text evidence="1">Belongs to the CTP synthase family.</text>
</comment>
<name>PYRG_ECOSE</name>
<accession>B6I6H6</accession>
<proteinExistence type="inferred from homology"/>
<keyword id="KW-0067">ATP-binding</keyword>
<keyword id="KW-0315">Glutamine amidotransferase</keyword>
<keyword id="KW-0436">Ligase</keyword>
<keyword id="KW-0460">Magnesium</keyword>
<keyword id="KW-0479">Metal-binding</keyword>
<keyword id="KW-0547">Nucleotide-binding</keyword>
<keyword id="KW-0665">Pyrimidine biosynthesis</keyword>
<dbReference type="EC" id="6.3.4.2" evidence="1"/>
<dbReference type="EMBL" id="AP009240">
    <property type="protein sequence ID" value="BAG78562.1"/>
    <property type="molecule type" value="Genomic_DNA"/>
</dbReference>
<dbReference type="RefSeq" id="WP_000210878.1">
    <property type="nucleotide sequence ID" value="NC_011415.1"/>
</dbReference>
<dbReference type="SMR" id="B6I6H6"/>
<dbReference type="MEROPS" id="C26.964"/>
<dbReference type="GeneID" id="93779218"/>
<dbReference type="KEGG" id="ecy:ECSE_3038"/>
<dbReference type="HOGENOM" id="CLU_011675_5_0_6"/>
<dbReference type="UniPathway" id="UPA00159">
    <property type="reaction ID" value="UER00277"/>
</dbReference>
<dbReference type="Proteomes" id="UP000008199">
    <property type="component" value="Chromosome"/>
</dbReference>
<dbReference type="GO" id="GO:0005829">
    <property type="term" value="C:cytosol"/>
    <property type="evidence" value="ECO:0007669"/>
    <property type="project" value="TreeGrafter"/>
</dbReference>
<dbReference type="GO" id="GO:0005524">
    <property type="term" value="F:ATP binding"/>
    <property type="evidence" value="ECO:0007669"/>
    <property type="project" value="UniProtKB-KW"/>
</dbReference>
<dbReference type="GO" id="GO:0003883">
    <property type="term" value="F:CTP synthase activity"/>
    <property type="evidence" value="ECO:0007669"/>
    <property type="project" value="UniProtKB-UniRule"/>
</dbReference>
<dbReference type="GO" id="GO:0004359">
    <property type="term" value="F:glutaminase activity"/>
    <property type="evidence" value="ECO:0007669"/>
    <property type="project" value="RHEA"/>
</dbReference>
<dbReference type="GO" id="GO:0042802">
    <property type="term" value="F:identical protein binding"/>
    <property type="evidence" value="ECO:0007669"/>
    <property type="project" value="TreeGrafter"/>
</dbReference>
<dbReference type="GO" id="GO:0046872">
    <property type="term" value="F:metal ion binding"/>
    <property type="evidence" value="ECO:0007669"/>
    <property type="project" value="UniProtKB-KW"/>
</dbReference>
<dbReference type="GO" id="GO:0044210">
    <property type="term" value="P:'de novo' CTP biosynthetic process"/>
    <property type="evidence" value="ECO:0007669"/>
    <property type="project" value="UniProtKB-UniRule"/>
</dbReference>
<dbReference type="GO" id="GO:0019856">
    <property type="term" value="P:pyrimidine nucleobase biosynthetic process"/>
    <property type="evidence" value="ECO:0007669"/>
    <property type="project" value="TreeGrafter"/>
</dbReference>
<dbReference type="CDD" id="cd03113">
    <property type="entry name" value="CTPS_N"/>
    <property type="match status" value="1"/>
</dbReference>
<dbReference type="CDD" id="cd01746">
    <property type="entry name" value="GATase1_CTP_Synthase"/>
    <property type="match status" value="1"/>
</dbReference>
<dbReference type="FunFam" id="3.40.50.300:FF:000009">
    <property type="entry name" value="CTP synthase"/>
    <property type="match status" value="1"/>
</dbReference>
<dbReference type="FunFam" id="3.40.50.880:FF:000002">
    <property type="entry name" value="CTP synthase"/>
    <property type="match status" value="1"/>
</dbReference>
<dbReference type="Gene3D" id="3.40.50.880">
    <property type="match status" value="1"/>
</dbReference>
<dbReference type="Gene3D" id="3.40.50.300">
    <property type="entry name" value="P-loop containing nucleotide triphosphate hydrolases"/>
    <property type="match status" value="1"/>
</dbReference>
<dbReference type="HAMAP" id="MF_01227">
    <property type="entry name" value="PyrG"/>
    <property type="match status" value="1"/>
</dbReference>
<dbReference type="InterPro" id="IPR029062">
    <property type="entry name" value="Class_I_gatase-like"/>
</dbReference>
<dbReference type="InterPro" id="IPR004468">
    <property type="entry name" value="CTP_synthase"/>
</dbReference>
<dbReference type="InterPro" id="IPR017456">
    <property type="entry name" value="CTP_synthase_N"/>
</dbReference>
<dbReference type="InterPro" id="IPR017926">
    <property type="entry name" value="GATASE"/>
</dbReference>
<dbReference type="InterPro" id="IPR033828">
    <property type="entry name" value="GATase1_CTP_Synthase"/>
</dbReference>
<dbReference type="InterPro" id="IPR027417">
    <property type="entry name" value="P-loop_NTPase"/>
</dbReference>
<dbReference type="NCBIfam" id="NF003792">
    <property type="entry name" value="PRK05380.1"/>
    <property type="match status" value="1"/>
</dbReference>
<dbReference type="NCBIfam" id="TIGR00337">
    <property type="entry name" value="PyrG"/>
    <property type="match status" value="1"/>
</dbReference>
<dbReference type="PANTHER" id="PTHR11550">
    <property type="entry name" value="CTP SYNTHASE"/>
    <property type="match status" value="1"/>
</dbReference>
<dbReference type="PANTHER" id="PTHR11550:SF0">
    <property type="entry name" value="CTP SYNTHASE-RELATED"/>
    <property type="match status" value="1"/>
</dbReference>
<dbReference type="Pfam" id="PF06418">
    <property type="entry name" value="CTP_synth_N"/>
    <property type="match status" value="1"/>
</dbReference>
<dbReference type="Pfam" id="PF00117">
    <property type="entry name" value="GATase"/>
    <property type="match status" value="1"/>
</dbReference>
<dbReference type="SUPFAM" id="SSF52317">
    <property type="entry name" value="Class I glutamine amidotransferase-like"/>
    <property type="match status" value="1"/>
</dbReference>
<dbReference type="SUPFAM" id="SSF52540">
    <property type="entry name" value="P-loop containing nucleoside triphosphate hydrolases"/>
    <property type="match status" value="1"/>
</dbReference>
<dbReference type="PROSITE" id="PS51273">
    <property type="entry name" value="GATASE_TYPE_1"/>
    <property type="match status" value="1"/>
</dbReference>
<evidence type="ECO:0000255" key="1">
    <source>
        <dbReference type="HAMAP-Rule" id="MF_01227"/>
    </source>
</evidence>
<gene>
    <name evidence="1" type="primary">pyrG</name>
    <name type="ordered locus">ECSE_3038</name>
</gene>